<proteinExistence type="inferred from homology"/>
<protein>
    <recommendedName>
        <fullName evidence="1">Probable replication restart protein PriA</fullName>
    </recommendedName>
    <alternativeName>
        <fullName evidence="1">Putative ATP-dependent DNA helicase PriA</fullName>
    </alternativeName>
</protein>
<reference key="1">
    <citation type="journal article" date="2002" name="J. Bacteriol.">
        <title>Whole-genome comparison of Mycobacterium tuberculosis clinical and laboratory strains.</title>
        <authorList>
            <person name="Fleischmann R.D."/>
            <person name="Alland D."/>
            <person name="Eisen J.A."/>
            <person name="Carpenter L."/>
            <person name="White O."/>
            <person name="Peterson J.D."/>
            <person name="DeBoy R.T."/>
            <person name="Dodson R.J."/>
            <person name="Gwinn M.L."/>
            <person name="Haft D.H."/>
            <person name="Hickey E.K."/>
            <person name="Kolonay J.F."/>
            <person name="Nelson W.C."/>
            <person name="Umayam L.A."/>
            <person name="Ermolaeva M.D."/>
            <person name="Salzberg S.L."/>
            <person name="Delcher A."/>
            <person name="Utterback T.R."/>
            <person name="Weidman J.F."/>
            <person name="Khouri H.M."/>
            <person name="Gill J."/>
            <person name="Mikula A."/>
            <person name="Bishai W."/>
            <person name="Jacobs W.R. Jr."/>
            <person name="Venter J.C."/>
            <person name="Fraser C.M."/>
        </authorList>
    </citation>
    <scope>NUCLEOTIDE SEQUENCE [LARGE SCALE GENOMIC DNA]</scope>
    <source>
        <strain>CDC 1551 / Oshkosh</strain>
    </source>
</reference>
<sequence length="654" mass="69962">MLSVPHLDRDFDYLVPAEHSDDAQPGVRVRVRFHGRLVDGFVLERRSDSDHHGKLGWLDRVVSPEPVLTTEIRRLVDAVAARYAGTRQDVLRLAVPARHARVEREITTAPGRPVVAPVDPSGWAAYGRGRQFLAALADSRAARAVWQALPGELWADRFAEAAAQTVRAGRTVLAIVPDQRDLDTLWQAATALVDEHSVVALSAGLGPEARYRRWLAALRGSARLVIGTRSAVFAPLSELGLVMVWADADDSLAEPRAPYPHAREVAMLRAHQARCAALIGGYARTAEAHALVRSGWAHDVVAPRPEVRARSPRVVALDDSGYDDARDPAARTARLPSYRWRRGSALQSGAPVLVQVPRRGYIPSLACGRCRAIARCRSCTGPLSLQGAGSPGAVCRWCGRVDPTLRCVRCGSDVVRAVVVGARRTAEELGRAFPGTAVITSAGDTLVPQLDAGPALVVATPGAEPRAPGGYGAALLLDSWALLGRQDLRAAEDALWRWMTAAALVRPRGAGGVVTVVAESSIPTVQSLIRWDPVGHAEAELAARTEVGLPPSVHIAALDGPAGTVTALLEAARLPDPDRLQADLLGPVDLPPGVRRPAGIPADAPVIRMLLRVCREQGLELAASLRRGIGVLSARQTRQTRSLVRVQIDPLHIG</sequence>
<dbReference type="EMBL" id="AE000516">
    <property type="protein sequence ID" value="AAK45711.1"/>
    <property type="molecule type" value="Genomic_DNA"/>
</dbReference>
<dbReference type="PIR" id="G70900">
    <property type="entry name" value="G70900"/>
</dbReference>
<dbReference type="RefSeq" id="WP_010924396.1">
    <property type="nucleotide sequence ID" value="NC_002755.2"/>
</dbReference>
<dbReference type="SMR" id="P9WMQ8"/>
<dbReference type="KEGG" id="mtc:MT1446"/>
<dbReference type="HOGENOM" id="CLU_015485_1_0_11"/>
<dbReference type="Proteomes" id="UP000001020">
    <property type="component" value="Chromosome"/>
</dbReference>
<dbReference type="GO" id="GO:1990077">
    <property type="term" value="C:primosome complex"/>
    <property type="evidence" value="ECO:0007669"/>
    <property type="project" value="UniProtKB-UniRule"/>
</dbReference>
<dbReference type="GO" id="GO:0043138">
    <property type="term" value="F:3'-5' DNA helicase activity"/>
    <property type="evidence" value="ECO:0007669"/>
    <property type="project" value="TreeGrafter"/>
</dbReference>
<dbReference type="GO" id="GO:0005524">
    <property type="term" value="F:ATP binding"/>
    <property type="evidence" value="ECO:0007669"/>
    <property type="project" value="UniProtKB-UniRule"/>
</dbReference>
<dbReference type="GO" id="GO:0003677">
    <property type="term" value="F:DNA binding"/>
    <property type="evidence" value="ECO:0007669"/>
    <property type="project" value="UniProtKB-UniRule"/>
</dbReference>
<dbReference type="GO" id="GO:0016787">
    <property type="term" value="F:hydrolase activity"/>
    <property type="evidence" value="ECO:0007669"/>
    <property type="project" value="UniProtKB-KW"/>
</dbReference>
<dbReference type="GO" id="GO:0008270">
    <property type="term" value="F:zinc ion binding"/>
    <property type="evidence" value="ECO:0007669"/>
    <property type="project" value="UniProtKB-UniRule"/>
</dbReference>
<dbReference type="GO" id="GO:0006310">
    <property type="term" value="P:DNA recombination"/>
    <property type="evidence" value="ECO:0007669"/>
    <property type="project" value="InterPro"/>
</dbReference>
<dbReference type="GO" id="GO:0006270">
    <property type="term" value="P:DNA replication initiation"/>
    <property type="evidence" value="ECO:0007669"/>
    <property type="project" value="TreeGrafter"/>
</dbReference>
<dbReference type="GO" id="GO:0006269">
    <property type="term" value="P:DNA replication, synthesis of primer"/>
    <property type="evidence" value="ECO:0007669"/>
    <property type="project" value="UniProtKB-KW"/>
</dbReference>
<dbReference type="GO" id="GO:0006302">
    <property type="term" value="P:double-strand break repair"/>
    <property type="evidence" value="ECO:0007669"/>
    <property type="project" value="InterPro"/>
</dbReference>
<dbReference type="FunFam" id="3.40.1440.60:FF:000002">
    <property type="entry name" value="Primosome assembly protein PriA"/>
    <property type="match status" value="1"/>
</dbReference>
<dbReference type="FunFam" id="3.40.50.300:FF:001817">
    <property type="entry name" value="Primosome assembly protein PriA"/>
    <property type="match status" value="1"/>
</dbReference>
<dbReference type="Gene3D" id="3.40.50.300">
    <property type="entry name" value="P-loop containing nucleotide triphosphate hydrolases"/>
    <property type="match status" value="1"/>
</dbReference>
<dbReference type="Gene3D" id="3.40.1440.60">
    <property type="entry name" value="PriA, 3(prime) DNA-binding domain"/>
    <property type="match status" value="1"/>
</dbReference>
<dbReference type="HAMAP" id="MF_00983">
    <property type="entry name" value="PriA"/>
    <property type="match status" value="1"/>
</dbReference>
<dbReference type="InterPro" id="IPR027417">
    <property type="entry name" value="P-loop_NTPase"/>
</dbReference>
<dbReference type="InterPro" id="IPR005259">
    <property type="entry name" value="PriA"/>
</dbReference>
<dbReference type="InterPro" id="IPR041222">
    <property type="entry name" value="PriA_3primeBD"/>
</dbReference>
<dbReference type="InterPro" id="IPR042115">
    <property type="entry name" value="PriA_3primeBD_sf"/>
</dbReference>
<dbReference type="InterPro" id="IPR050880">
    <property type="entry name" value="PriA_helicase"/>
</dbReference>
<dbReference type="NCBIfam" id="NF011454">
    <property type="entry name" value="PRK14873.1-4"/>
    <property type="match status" value="1"/>
</dbReference>
<dbReference type="PANTHER" id="PTHR30580">
    <property type="entry name" value="PRIMOSOMAL PROTEIN N"/>
    <property type="match status" value="1"/>
</dbReference>
<dbReference type="PANTHER" id="PTHR30580:SF0">
    <property type="entry name" value="PRIMOSOMAL PROTEIN N"/>
    <property type="match status" value="1"/>
</dbReference>
<dbReference type="Pfam" id="PF17764">
    <property type="entry name" value="PriA_3primeBD"/>
    <property type="match status" value="1"/>
</dbReference>
<keyword id="KW-0067">ATP-binding</keyword>
<keyword id="KW-0235">DNA replication</keyword>
<keyword id="KW-0238">DNA-binding</keyword>
<keyword id="KW-0479">Metal-binding</keyword>
<keyword id="KW-0547">Nucleotide-binding</keyword>
<keyword id="KW-0639">Primosome</keyword>
<keyword id="KW-1185">Reference proteome</keyword>
<keyword id="KW-0862">Zinc</keyword>
<organism>
    <name type="scientific">Mycobacterium tuberculosis (strain CDC 1551 / Oshkosh)</name>
    <dbReference type="NCBI Taxonomy" id="83331"/>
    <lineage>
        <taxon>Bacteria</taxon>
        <taxon>Bacillati</taxon>
        <taxon>Actinomycetota</taxon>
        <taxon>Actinomycetes</taxon>
        <taxon>Mycobacteriales</taxon>
        <taxon>Mycobacteriaceae</taxon>
        <taxon>Mycobacterium</taxon>
        <taxon>Mycobacterium tuberculosis complex</taxon>
    </lineage>
</organism>
<comment type="function">
    <text evidence="1">Initiates the restart of stalled replication forks, which reloads the replicative helicase on sites other than the origin of replication. Recognizes and binds to abandoned replication forks and remodels them to uncover a helicase loading site. Promotes assembly of the primosome at these replication forks.</text>
</comment>
<comment type="cofactor">
    <cofactor evidence="1">
        <name>Zn(2+)</name>
        <dbReference type="ChEBI" id="CHEBI:29105"/>
    </cofactor>
    <text evidence="1">Binds 2 zinc ions per subunit.</text>
</comment>
<comment type="subunit">
    <text evidence="1">Component of the replication restart primosome.</text>
</comment>
<comment type="similarity">
    <text evidence="1">Belongs to the helicase family. PriA subfamily.</text>
</comment>
<comment type="caution">
    <text evidence="1">As this protein does not have any detectable helicase domains, it probably does not have helicase activity.</text>
</comment>
<feature type="chain" id="PRO_0000427261" description="Probable replication restart protein PriA">
    <location>
        <begin position="1"/>
        <end position="654"/>
    </location>
</feature>
<feature type="binding site" evidence="1">
    <location>
        <position position="367"/>
    </location>
    <ligand>
        <name>Zn(2+)</name>
        <dbReference type="ChEBI" id="CHEBI:29105"/>
        <label>1</label>
    </ligand>
</feature>
<feature type="binding site" evidence="1">
    <location>
        <position position="370"/>
    </location>
    <ligand>
        <name>Zn(2+)</name>
        <dbReference type="ChEBI" id="CHEBI:29105"/>
        <label>1</label>
    </ligand>
</feature>
<feature type="binding site" evidence="1">
    <location>
        <position position="376"/>
    </location>
    <ligand>
        <name>Zn(2+)</name>
        <dbReference type="ChEBI" id="CHEBI:29105"/>
        <label>2</label>
    </ligand>
</feature>
<feature type="binding site" evidence="1">
    <location>
        <position position="379"/>
    </location>
    <ligand>
        <name>Zn(2+)</name>
        <dbReference type="ChEBI" id="CHEBI:29105"/>
        <label>2</label>
    </ligand>
</feature>
<feature type="binding site" evidence="1">
    <location>
        <position position="395"/>
    </location>
    <ligand>
        <name>Zn(2+)</name>
        <dbReference type="ChEBI" id="CHEBI:29105"/>
        <label>2</label>
    </ligand>
</feature>
<feature type="binding site" evidence="1">
    <location>
        <position position="398"/>
    </location>
    <ligand>
        <name>Zn(2+)</name>
        <dbReference type="ChEBI" id="CHEBI:29105"/>
        <label>2</label>
    </ligand>
</feature>
<feature type="binding site" evidence="1">
    <location>
        <position position="407"/>
    </location>
    <ligand>
        <name>Zn(2+)</name>
        <dbReference type="ChEBI" id="CHEBI:29105"/>
        <label>1</label>
    </ligand>
</feature>
<feature type="binding site" evidence="1">
    <location>
        <position position="410"/>
    </location>
    <ligand>
        <name>Zn(2+)</name>
        <dbReference type="ChEBI" id="CHEBI:29105"/>
        <label>1</label>
    </ligand>
</feature>
<evidence type="ECO:0000255" key="1">
    <source>
        <dbReference type="HAMAP-Rule" id="MF_00983"/>
    </source>
</evidence>
<name>PRIA_MYCTO</name>
<accession>P9WMQ8</accession>
<accession>L0T6J5</accession>
<accession>P0A5A5</accession>
<accession>P71670</accession>
<gene>
    <name evidence="1" type="primary">priA</name>
    <name type="ordered locus">MT1446</name>
</gene>